<accession>O44125</accession>
<sequence>MTKGTTSFGKRHNKSHTQCRRCGRKSYHIQKKTCSSCGYPSARLRKYNWSEKAKRRRTTGTGRMLHLKRVHRRFKQGFRSGPPKPVKA</sequence>
<organism>
    <name type="scientific">Schistosoma mansoni</name>
    <name type="common">Blood fluke</name>
    <dbReference type="NCBI Taxonomy" id="6183"/>
    <lineage>
        <taxon>Eukaryota</taxon>
        <taxon>Metazoa</taxon>
        <taxon>Spiralia</taxon>
        <taxon>Lophotrochozoa</taxon>
        <taxon>Platyhelminthes</taxon>
        <taxon>Trematoda</taxon>
        <taxon>Digenea</taxon>
        <taxon>Strigeidida</taxon>
        <taxon>Schistosomatoidea</taxon>
        <taxon>Schistosomatidae</taxon>
        <taxon>Schistosoma</taxon>
    </lineage>
</organism>
<name>RL37_SCHMA</name>
<protein>
    <recommendedName>
        <fullName evidence="4">Large ribosomal subunit protein eL37</fullName>
    </recommendedName>
    <alternativeName>
        <fullName>60S ribosomal protein L37</fullName>
    </alternativeName>
</protein>
<dbReference type="EMBL" id="AF035770">
    <property type="protein sequence ID" value="AAB88508.1"/>
    <property type="molecule type" value="mRNA"/>
</dbReference>
<dbReference type="RefSeq" id="XP_018653218.1">
    <property type="nucleotide sequence ID" value="XM_018798258.1"/>
</dbReference>
<dbReference type="SMR" id="O44125"/>
<dbReference type="FunCoup" id="O44125">
    <property type="interactions" value="604"/>
</dbReference>
<dbReference type="STRING" id="6183.O44125"/>
<dbReference type="EnsemblMetazoa" id="Smp_035800.1">
    <property type="protein sequence ID" value="Smp_035800.1"/>
    <property type="gene ID" value="Smp_035800"/>
</dbReference>
<dbReference type="KEGG" id="smm:Smp_035800"/>
<dbReference type="WBParaSite" id="Smp_035800.1">
    <property type="protein sequence ID" value="Smp_035800.1"/>
    <property type="gene ID" value="Smp_035800"/>
</dbReference>
<dbReference type="CTD" id="8345910"/>
<dbReference type="eggNOG" id="KOG3475">
    <property type="taxonomic scope" value="Eukaryota"/>
</dbReference>
<dbReference type="HOGENOM" id="CLU_150908_2_1_1"/>
<dbReference type="InParanoid" id="O44125"/>
<dbReference type="OMA" id="RMAYLKH"/>
<dbReference type="OrthoDB" id="10259236at2759"/>
<dbReference type="PhylomeDB" id="O44125"/>
<dbReference type="Proteomes" id="UP000008854">
    <property type="component" value="Unassembled WGS sequence"/>
</dbReference>
<dbReference type="ExpressionAtlas" id="O44125">
    <property type="expression patterns" value="differential"/>
</dbReference>
<dbReference type="GO" id="GO:0022625">
    <property type="term" value="C:cytosolic large ribosomal subunit"/>
    <property type="evidence" value="ECO:0007669"/>
    <property type="project" value="TreeGrafter"/>
</dbReference>
<dbReference type="GO" id="GO:0019843">
    <property type="term" value="F:rRNA binding"/>
    <property type="evidence" value="ECO:0007669"/>
    <property type="project" value="UniProtKB-KW"/>
</dbReference>
<dbReference type="GO" id="GO:0003735">
    <property type="term" value="F:structural constituent of ribosome"/>
    <property type="evidence" value="ECO:0007669"/>
    <property type="project" value="InterPro"/>
</dbReference>
<dbReference type="GO" id="GO:0008270">
    <property type="term" value="F:zinc ion binding"/>
    <property type="evidence" value="ECO:0007669"/>
    <property type="project" value="UniProtKB-KW"/>
</dbReference>
<dbReference type="GO" id="GO:0006412">
    <property type="term" value="P:translation"/>
    <property type="evidence" value="ECO:0007669"/>
    <property type="project" value="InterPro"/>
</dbReference>
<dbReference type="FunFam" id="2.20.25.30:FF:000001">
    <property type="entry name" value="Ribosomal protein L37"/>
    <property type="match status" value="1"/>
</dbReference>
<dbReference type="Gene3D" id="2.20.25.30">
    <property type="match status" value="1"/>
</dbReference>
<dbReference type="HAMAP" id="MF_00547">
    <property type="entry name" value="Ribosomal_eL37"/>
    <property type="match status" value="1"/>
</dbReference>
<dbReference type="InterPro" id="IPR001569">
    <property type="entry name" value="Ribosomal_eL37"/>
</dbReference>
<dbReference type="InterPro" id="IPR011331">
    <property type="entry name" value="Ribosomal_eL37/eL43"/>
</dbReference>
<dbReference type="InterPro" id="IPR018267">
    <property type="entry name" value="Ribosomal_eL37_CS"/>
</dbReference>
<dbReference type="InterPro" id="IPR011332">
    <property type="entry name" value="Ribosomal_zn-bd"/>
</dbReference>
<dbReference type="NCBIfam" id="NF003214">
    <property type="entry name" value="PRK04179.1"/>
    <property type="match status" value="1"/>
</dbReference>
<dbReference type="PANTHER" id="PTHR10768">
    <property type="entry name" value="60S RIBOSOMAL PROTEIN L37"/>
    <property type="match status" value="1"/>
</dbReference>
<dbReference type="PANTHER" id="PTHR10768:SF0">
    <property type="entry name" value="RIBOSOMAL PROTEIN L37"/>
    <property type="match status" value="1"/>
</dbReference>
<dbReference type="Pfam" id="PF01907">
    <property type="entry name" value="Ribosomal_L37e"/>
    <property type="match status" value="1"/>
</dbReference>
<dbReference type="SUPFAM" id="SSF57829">
    <property type="entry name" value="Zn-binding ribosomal proteins"/>
    <property type="match status" value="1"/>
</dbReference>
<dbReference type="PROSITE" id="PS01077">
    <property type="entry name" value="RIBOSOMAL_L37E"/>
    <property type="match status" value="1"/>
</dbReference>
<proteinExistence type="inferred from homology"/>
<reference key="1">
    <citation type="submission" date="1997-11" db="EMBL/GenBank/DDBJ databases">
        <title>Ribosomal protein L37 of Schistosoma mansoni.</title>
        <authorList>
            <person name="Mecozzi B."/>
            <person name="Vigneti E."/>
            <person name="Liberti P."/>
            <person name="Festucci A."/>
            <person name="Valle C."/>
            <person name="Cioli D."/>
        </authorList>
    </citation>
    <scope>NUCLEOTIDE SEQUENCE [MRNA]</scope>
</reference>
<feature type="initiator methionine" description="Removed" evidence="1">
    <location>
        <position position="1"/>
    </location>
</feature>
<feature type="chain" id="PRO_0000139714" description="Large ribosomal subunit protein eL37">
    <location>
        <begin position="2"/>
        <end position="88"/>
    </location>
</feature>
<feature type="zinc finger region" description="C4-type" evidence="2">
    <location>
        <begin position="19"/>
        <end position="37"/>
    </location>
</feature>
<feature type="region of interest" description="Disordered" evidence="3">
    <location>
        <begin position="1"/>
        <end position="24"/>
    </location>
</feature>
<feature type="compositionally biased region" description="Basic residues" evidence="3">
    <location>
        <begin position="9"/>
        <end position="24"/>
    </location>
</feature>
<feature type="binding site" evidence="1">
    <location>
        <position position="19"/>
    </location>
    <ligand>
        <name>Zn(2+)</name>
        <dbReference type="ChEBI" id="CHEBI:29105"/>
    </ligand>
</feature>
<feature type="binding site" evidence="1">
    <location>
        <position position="22"/>
    </location>
    <ligand>
        <name>Zn(2+)</name>
        <dbReference type="ChEBI" id="CHEBI:29105"/>
    </ligand>
</feature>
<feature type="binding site" evidence="1">
    <location>
        <position position="34"/>
    </location>
    <ligand>
        <name>Zn(2+)</name>
        <dbReference type="ChEBI" id="CHEBI:29105"/>
    </ligand>
</feature>
<feature type="binding site" evidence="1">
    <location>
        <position position="37"/>
    </location>
    <ligand>
        <name>Zn(2+)</name>
        <dbReference type="ChEBI" id="CHEBI:29105"/>
    </ligand>
</feature>
<gene>
    <name type="primary">RPL37</name>
</gene>
<keyword id="KW-0479">Metal-binding</keyword>
<keyword id="KW-1185">Reference proteome</keyword>
<keyword id="KW-0687">Ribonucleoprotein</keyword>
<keyword id="KW-0689">Ribosomal protein</keyword>
<keyword id="KW-0694">RNA-binding</keyword>
<keyword id="KW-0699">rRNA-binding</keyword>
<keyword id="KW-0862">Zinc</keyword>
<keyword id="KW-0863">Zinc-finger</keyword>
<comment type="function">
    <text evidence="1">Binds to the 23S rRNA.</text>
</comment>
<comment type="cofactor">
    <cofactor evidence="1">
        <name>Zn(2+)</name>
        <dbReference type="ChEBI" id="CHEBI:29105"/>
    </cofactor>
    <text evidence="1">Binds 1 zinc ion per subunit.</text>
</comment>
<comment type="similarity">
    <text evidence="4">Belongs to the eukaryotic ribosomal protein eL37 family.</text>
</comment>
<evidence type="ECO:0000250" key="1"/>
<evidence type="ECO:0000255" key="2"/>
<evidence type="ECO:0000256" key="3">
    <source>
        <dbReference type="SAM" id="MobiDB-lite"/>
    </source>
</evidence>
<evidence type="ECO:0000305" key="4"/>